<gene>
    <name type="primary">bath-45</name>
    <name type="ORF">F29C12.5</name>
</gene>
<feature type="chain" id="PRO_0000246702" description="BTB and MATH domain-containing protein 45">
    <location>
        <begin position="1"/>
        <end position="468"/>
    </location>
</feature>
<feature type="domain" description="MATH" evidence="2">
    <location>
        <begin position="7"/>
        <end position="124"/>
    </location>
</feature>
<feature type="domain" description="BTB 1" evidence="1">
    <location>
        <begin position="148"/>
        <end position="215"/>
    </location>
</feature>
<feature type="domain" description="BTB 2" evidence="1">
    <location>
        <begin position="304"/>
        <end position="368"/>
    </location>
</feature>
<evidence type="ECO:0000255" key="1">
    <source>
        <dbReference type="PROSITE-ProRule" id="PRU00037"/>
    </source>
</evidence>
<evidence type="ECO:0000255" key="2">
    <source>
        <dbReference type="PROSITE-ProRule" id="PRU00129"/>
    </source>
</evidence>
<protein>
    <recommendedName>
        <fullName>BTB and MATH domain-containing protein 45</fullName>
    </recommendedName>
</protein>
<reference key="1">
    <citation type="journal article" date="1998" name="Science">
        <title>Genome sequence of the nematode C. elegans: a platform for investigating biology.</title>
        <authorList>
            <consortium name="The C. elegans sequencing consortium"/>
        </authorList>
    </citation>
    <scope>NUCLEOTIDE SEQUENCE [LARGE SCALE GENOMIC DNA]</scope>
    <source>
        <strain>Bristol N2</strain>
    </source>
</reference>
<sequence>MAAAHKVFELSHVFKDVSKIGDDESVCSPNEDYFGVPWKIVLRHKDEKMGVFLSCEKPSNNDAHCIVNVVYSVKLMSSSGVCYIKSDSKLFGEITEHGWVNFVNWNTMVDAFLIDDSIIIEVLVKTIFMSGLPKKSPKNFDESNKEFSDGIVVVKHQNFHILKKFLAFHCEYLEKLFFGDFKEAGKAEVTLKAISSTDFHYLLAVLYEDYAIDDDNVGGILRLASYLQVPIVIRKCEQFLIEGSGKPMEIRLDIAEKECLQNLKKHCLSKVGTADQIEAARAILPSDIPKRALKKFDESNKEFSDVIFVVEHNKFYVLKQILASHSSHFKKIFVENVDKREFTLADIDSNDFQNLVEVMYGVSFIDDLTVEGVLHLAHMYDRPFPMQKCVEFLIDLSEKSPKEKLKIAKAYQLKNLEKAALARINLPESIRAALSCDMAQMEVEVLKALMQKALFHLSDTKVHTETFF</sequence>
<organism>
    <name type="scientific">Caenorhabditis elegans</name>
    <dbReference type="NCBI Taxonomy" id="6239"/>
    <lineage>
        <taxon>Eukaryota</taxon>
        <taxon>Metazoa</taxon>
        <taxon>Ecdysozoa</taxon>
        <taxon>Nematoda</taxon>
        <taxon>Chromadorea</taxon>
        <taxon>Rhabditida</taxon>
        <taxon>Rhabditina</taxon>
        <taxon>Rhabditomorpha</taxon>
        <taxon>Rhabditoidea</taxon>
        <taxon>Rhabditidae</taxon>
        <taxon>Peloderinae</taxon>
        <taxon>Caenorhabditis</taxon>
    </lineage>
</organism>
<dbReference type="EMBL" id="Z81519">
    <property type="protein sequence ID" value="CAB04217.1"/>
    <property type="molecule type" value="Genomic_DNA"/>
</dbReference>
<dbReference type="PIR" id="T21535">
    <property type="entry name" value="T21535"/>
</dbReference>
<dbReference type="RefSeq" id="NP_496788.1">
    <property type="nucleotide sequence ID" value="NM_064387.3"/>
</dbReference>
<dbReference type="SMR" id="Q9XV51"/>
<dbReference type="FunCoup" id="Q9XV51">
    <property type="interactions" value="10"/>
</dbReference>
<dbReference type="STRING" id="6239.F29C12.5.1"/>
<dbReference type="PaxDb" id="6239-F29C12.5"/>
<dbReference type="EnsemblMetazoa" id="F29C12.5.1">
    <property type="protein sequence ID" value="F29C12.5.1"/>
    <property type="gene ID" value="WBGene00009247"/>
</dbReference>
<dbReference type="GeneID" id="185115"/>
<dbReference type="KEGG" id="cel:CELE_F29C12.5"/>
<dbReference type="UCSC" id="F29C12.5">
    <property type="organism name" value="c. elegans"/>
</dbReference>
<dbReference type="AGR" id="WB:WBGene00009247"/>
<dbReference type="CTD" id="185115"/>
<dbReference type="WormBase" id="F29C12.5">
    <property type="protein sequence ID" value="CE19823"/>
    <property type="gene ID" value="WBGene00009247"/>
    <property type="gene designation" value="bath-45"/>
</dbReference>
<dbReference type="eggNOG" id="ENOG502TJK8">
    <property type="taxonomic scope" value="Eukaryota"/>
</dbReference>
<dbReference type="GeneTree" id="ENSGT00390000016595"/>
<dbReference type="HOGENOM" id="CLU_584271_0_0_1"/>
<dbReference type="InParanoid" id="Q9XV51"/>
<dbReference type="OrthoDB" id="437903at2759"/>
<dbReference type="PhylomeDB" id="Q9XV51"/>
<dbReference type="PRO" id="PR:Q9XV51"/>
<dbReference type="Proteomes" id="UP000001940">
    <property type="component" value="Chromosome II"/>
</dbReference>
<dbReference type="Bgee" id="WBGene00009247">
    <property type="expression patterns" value="Expressed in germ line (C elegans) and 2 other cell types or tissues"/>
</dbReference>
<dbReference type="CDD" id="cd01165">
    <property type="entry name" value="BTB_POZ"/>
    <property type="match status" value="1"/>
</dbReference>
<dbReference type="CDD" id="cd18186">
    <property type="entry name" value="BTB_POZ_ZBTB_KLHL-like"/>
    <property type="match status" value="1"/>
</dbReference>
<dbReference type="CDD" id="cd00121">
    <property type="entry name" value="MATH"/>
    <property type="match status" value="1"/>
</dbReference>
<dbReference type="Gene3D" id="2.60.210.10">
    <property type="entry name" value="Apoptosis, Tumor Necrosis Factor Receptor Associated Protein 2, Chain A"/>
    <property type="match status" value="1"/>
</dbReference>
<dbReference type="Gene3D" id="3.30.710.10">
    <property type="entry name" value="Potassium Channel Kv1.1, Chain A"/>
    <property type="match status" value="2"/>
</dbReference>
<dbReference type="InterPro" id="IPR052664">
    <property type="entry name" value="BTB-MATH_domain_protein"/>
</dbReference>
<dbReference type="InterPro" id="IPR000210">
    <property type="entry name" value="BTB/POZ_dom"/>
</dbReference>
<dbReference type="InterPro" id="IPR002083">
    <property type="entry name" value="MATH/TRAF_dom"/>
</dbReference>
<dbReference type="InterPro" id="IPR011333">
    <property type="entry name" value="SKP1/BTB/POZ_sf"/>
</dbReference>
<dbReference type="InterPro" id="IPR008974">
    <property type="entry name" value="TRAF-like"/>
</dbReference>
<dbReference type="PANTHER" id="PTHR22743:SF165">
    <property type="entry name" value="BTB AND MATH DOMAIN CONTAINING-RELATED"/>
    <property type="match status" value="1"/>
</dbReference>
<dbReference type="PANTHER" id="PTHR22743">
    <property type="entry name" value="MEPRIN/TRAF-LIKE MATH FAMILY-C.ELEGANS"/>
    <property type="match status" value="1"/>
</dbReference>
<dbReference type="Pfam" id="PF00651">
    <property type="entry name" value="BTB"/>
    <property type="match status" value="2"/>
</dbReference>
<dbReference type="Pfam" id="PF00917">
    <property type="entry name" value="MATH"/>
    <property type="match status" value="1"/>
</dbReference>
<dbReference type="SMART" id="SM00225">
    <property type="entry name" value="BTB"/>
    <property type="match status" value="2"/>
</dbReference>
<dbReference type="SMART" id="SM00061">
    <property type="entry name" value="MATH"/>
    <property type="match status" value="1"/>
</dbReference>
<dbReference type="SUPFAM" id="SSF54695">
    <property type="entry name" value="POZ domain"/>
    <property type="match status" value="2"/>
</dbReference>
<dbReference type="SUPFAM" id="SSF49599">
    <property type="entry name" value="TRAF domain-like"/>
    <property type="match status" value="1"/>
</dbReference>
<dbReference type="PROSITE" id="PS50097">
    <property type="entry name" value="BTB"/>
    <property type="match status" value="2"/>
</dbReference>
<dbReference type="PROSITE" id="PS50144">
    <property type="entry name" value="MATH"/>
    <property type="match status" value="1"/>
</dbReference>
<accession>Q9XV51</accession>
<name>BAT45_CAEEL</name>
<keyword id="KW-1185">Reference proteome</keyword>
<keyword id="KW-0677">Repeat</keyword>
<proteinExistence type="predicted"/>